<dbReference type="EC" id="2.6.1.9" evidence="1"/>
<dbReference type="EMBL" id="CP000463">
    <property type="protein sequence ID" value="ABJ08266.1"/>
    <property type="molecule type" value="Genomic_DNA"/>
</dbReference>
<dbReference type="SMR" id="Q07IG8"/>
<dbReference type="STRING" id="316055.RPE_4342"/>
<dbReference type="KEGG" id="rpe:RPE_4342"/>
<dbReference type="eggNOG" id="COG0079">
    <property type="taxonomic scope" value="Bacteria"/>
</dbReference>
<dbReference type="HOGENOM" id="CLU_017584_3_3_5"/>
<dbReference type="OrthoDB" id="9809616at2"/>
<dbReference type="UniPathway" id="UPA00031">
    <property type="reaction ID" value="UER00012"/>
</dbReference>
<dbReference type="GO" id="GO:0004400">
    <property type="term" value="F:histidinol-phosphate transaminase activity"/>
    <property type="evidence" value="ECO:0007669"/>
    <property type="project" value="UniProtKB-UniRule"/>
</dbReference>
<dbReference type="GO" id="GO:0030170">
    <property type="term" value="F:pyridoxal phosphate binding"/>
    <property type="evidence" value="ECO:0007669"/>
    <property type="project" value="InterPro"/>
</dbReference>
<dbReference type="GO" id="GO:0000105">
    <property type="term" value="P:L-histidine biosynthetic process"/>
    <property type="evidence" value="ECO:0007669"/>
    <property type="project" value="UniProtKB-UniRule"/>
</dbReference>
<dbReference type="CDD" id="cd00609">
    <property type="entry name" value="AAT_like"/>
    <property type="match status" value="1"/>
</dbReference>
<dbReference type="Gene3D" id="3.90.1150.10">
    <property type="entry name" value="Aspartate Aminotransferase, domain 1"/>
    <property type="match status" value="1"/>
</dbReference>
<dbReference type="Gene3D" id="3.40.640.10">
    <property type="entry name" value="Type I PLP-dependent aspartate aminotransferase-like (Major domain)"/>
    <property type="match status" value="1"/>
</dbReference>
<dbReference type="HAMAP" id="MF_01023">
    <property type="entry name" value="HisC_aminotrans_2"/>
    <property type="match status" value="1"/>
</dbReference>
<dbReference type="InterPro" id="IPR004839">
    <property type="entry name" value="Aminotransferase_I/II_large"/>
</dbReference>
<dbReference type="InterPro" id="IPR005861">
    <property type="entry name" value="HisP_aminotrans"/>
</dbReference>
<dbReference type="InterPro" id="IPR050106">
    <property type="entry name" value="HistidinolP_aminotransfase"/>
</dbReference>
<dbReference type="InterPro" id="IPR015424">
    <property type="entry name" value="PyrdxlP-dep_Trfase"/>
</dbReference>
<dbReference type="InterPro" id="IPR015421">
    <property type="entry name" value="PyrdxlP-dep_Trfase_major"/>
</dbReference>
<dbReference type="InterPro" id="IPR015422">
    <property type="entry name" value="PyrdxlP-dep_Trfase_small"/>
</dbReference>
<dbReference type="NCBIfam" id="TIGR01141">
    <property type="entry name" value="hisC"/>
    <property type="match status" value="1"/>
</dbReference>
<dbReference type="PANTHER" id="PTHR43643:SF3">
    <property type="entry name" value="HISTIDINOL-PHOSPHATE AMINOTRANSFERASE"/>
    <property type="match status" value="1"/>
</dbReference>
<dbReference type="PANTHER" id="PTHR43643">
    <property type="entry name" value="HISTIDINOL-PHOSPHATE AMINOTRANSFERASE 2"/>
    <property type="match status" value="1"/>
</dbReference>
<dbReference type="Pfam" id="PF00155">
    <property type="entry name" value="Aminotran_1_2"/>
    <property type="match status" value="1"/>
</dbReference>
<dbReference type="SUPFAM" id="SSF53383">
    <property type="entry name" value="PLP-dependent transferases"/>
    <property type="match status" value="1"/>
</dbReference>
<gene>
    <name evidence="1" type="primary">hisC</name>
    <name type="ordered locus">RPE_4342</name>
</gene>
<accession>Q07IG8</accession>
<protein>
    <recommendedName>
        <fullName evidence="1">Histidinol-phosphate aminotransferase</fullName>
        <ecNumber evidence="1">2.6.1.9</ecNumber>
    </recommendedName>
    <alternativeName>
        <fullName evidence="1">Imidazole acetol-phosphate transaminase</fullName>
    </alternativeName>
</protein>
<reference key="1">
    <citation type="submission" date="2006-09" db="EMBL/GenBank/DDBJ databases">
        <title>Complete sequence of Rhodopseudomonas palustris BisA53.</title>
        <authorList>
            <consortium name="US DOE Joint Genome Institute"/>
            <person name="Copeland A."/>
            <person name="Lucas S."/>
            <person name="Lapidus A."/>
            <person name="Barry K."/>
            <person name="Detter J.C."/>
            <person name="Glavina del Rio T."/>
            <person name="Hammon N."/>
            <person name="Israni S."/>
            <person name="Dalin E."/>
            <person name="Tice H."/>
            <person name="Pitluck S."/>
            <person name="Chain P."/>
            <person name="Malfatti S."/>
            <person name="Shin M."/>
            <person name="Vergez L."/>
            <person name="Schmutz J."/>
            <person name="Larimer F."/>
            <person name="Land M."/>
            <person name="Hauser L."/>
            <person name="Pelletier D.A."/>
            <person name="Kyrpides N."/>
            <person name="Kim E."/>
            <person name="Harwood C.S."/>
            <person name="Oda Y."/>
            <person name="Richardson P."/>
        </authorList>
    </citation>
    <scope>NUCLEOTIDE SEQUENCE [LARGE SCALE GENOMIC DNA]</scope>
    <source>
        <strain>BisA53</strain>
    </source>
</reference>
<keyword id="KW-0028">Amino-acid biosynthesis</keyword>
<keyword id="KW-0032">Aminotransferase</keyword>
<keyword id="KW-0368">Histidine biosynthesis</keyword>
<keyword id="KW-0663">Pyridoxal phosphate</keyword>
<keyword id="KW-0808">Transferase</keyword>
<organism>
    <name type="scientific">Rhodopseudomonas palustris (strain BisA53)</name>
    <dbReference type="NCBI Taxonomy" id="316055"/>
    <lineage>
        <taxon>Bacteria</taxon>
        <taxon>Pseudomonadati</taxon>
        <taxon>Pseudomonadota</taxon>
        <taxon>Alphaproteobacteria</taxon>
        <taxon>Hyphomicrobiales</taxon>
        <taxon>Nitrobacteraceae</taxon>
        <taxon>Rhodopseudomonas</taxon>
    </lineage>
</organism>
<proteinExistence type="inferred from homology"/>
<feature type="chain" id="PRO_1000063493" description="Histidinol-phosphate aminotransferase">
    <location>
        <begin position="1"/>
        <end position="365"/>
    </location>
</feature>
<feature type="region of interest" description="Disordered" evidence="2">
    <location>
        <begin position="1"/>
        <end position="22"/>
    </location>
</feature>
<feature type="modified residue" description="N6-(pyridoxal phosphate)lysine" evidence="1">
    <location>
        <position position="221"/>
    </location>
</feature>
<comment type="catalytic activity">
    <reaction evidence="1">
        <text>L-histidinol phosphate + 2-oxoglutarate = 3-(imidazol-4-yl)-2-oxopropyl phosphate + L-glutamate</text>
        <dbReference type="Rhea" id="RHEA:23744"/>
        <dbReference type="ChEBI" id="CHEBI:16810"/>
        <dbReference type="ChEBI" id="CHEBI:29985"/>
        <dbReference type="ChEBI" id="CHEBI:57766"/>
        <dbReference type="ChEBI" id="CHEBI:57980"/>
        <dbReference type="EC" id="2.6.1.9"/>
    </reaction>
</comment>
<comment type="cofactor">
    <cofactor evidence="1">
        <name>pyridoxal 5'-phosphate</name>
        <dbReference type="ChEBI" id="CHEBI:597326"/>
    </cofactor>
</comment>
<comment type="pathway">
    <text evidence="1">Amino-acid biosynthesis; L-histidine biosynthesis; L-histidine from 5-phospho-alpha-D-ribose 1-diphosphate: step 7/9.</text>
</comment>
<comment type="subunit">
    <text evidence="1">Homodimer.</text>
</comment>
<comment type="similarity">
    <text evidence="1">Belongs to the class-II pyridoxal-phosphate-dependent aminotransferase family. Histidinol-phosphate aminotransferase subfamily.</text>
</comment>
<sequence>MSRPVPNPGILDIAPYTPGKSPVAQPGRKVFKLSANETPFGPSPHAIAAYQSAADHLEDYPEGTSRVLREAIGKTFGLDPDRIICGAGSDEILNLLAHTYLAPGDEAIATTYGFLVYPIATMANGAKLVIAEEKNLTCDVDAILAKVSPNTKLVWLANPNNPTGTYIPFDEVRRLRAGLPEHVVLVLDGAYADYVAKNDYETGIELVSTTENTVVCHTFSKIHGLAALRIGWMFGPANIVDAVNRIRGPFNTSVPAQLAAVAAIKDTAHVEMSRAHTIQWRDRLTEEFTKLGLTVTPSVCNFVLMHFPQTAGKTAAEADAFLTQRGLVLRGLNNYGLPHALRMTIGTDEANELVIAALREFMAQP</sequence>
<name>HIS8_RHOP5</name>
<evidence type="ECO:0000255" key="1">
    <source>
        <dbReference type="HAMAP-Rule" id="MF_01023"/>
    </source>
</evidence>
<evidence type="ECO:0000256" key="2">
    <source>
        <dbReference type="SAM" id="MobiDB-lite"/>
    </source>
</evidence>